<proteinExistence type="evidence at transcript level"/>
<dbReference type="EC" id="3.6.5.-" evidence="1"/>
<dbReference type="EMBL" id="Z97025">
    <property type="protein sequence ID" value="CAB09712.1"/>
    <property type="molecule type" value="Genomic_DNA"/>
</dbReference>
<dbReference type="EMBL" id="AL009126">
    <property type="protein sequence ID" value="CAB13350.1"/>
    <property type="molecule type" value="Genomic_DNA"/>
</dbReference>
<dbReference type="PIR" id="E69872">
    <property type="entry name" value="E69872"/>
</dbReference>
<dbReference type="RefSeq" id="NP_389360.1">
    <property type="nucleotide sequence ID" value="NC_000964.3"/>
</dbReference>
<dbReference type="SMR" id="O07631"/>
<dbReference type="FunCoup" id="O07631">
    <property type="interactions" value="550"/>
</dbReference>
<dbReference type="IntAct" id="O07631">
    <property type="interactions" value="1"/>
</dbReference>
<dbReference type="MINT" id="O07631"/>
<dbReference type="STRING" id="224308.BSU14770"/>
<dbReference type="jPOST" id="O07631"/>
<dbReference type="PaxDb" id="224308-BSU14770"/>
<dbReference type="EnsemblBacteria" id="CAB13350">
    <property type="protein sequence ID" value="CAB13350"/>
    <property type="gene ID" value="BSU_14770"/>
</dbReference>
<dbReference type="GeneID" id="935966"/>
<dbReference type="KEGG" id="bsu:BSU14770"/>
<dbReference type="PATRIC" id="fig|224308.179.peg.1611"/>
<dbReference type="eggNOG" id="COG1217">
    <property type="taxonomic scope" value="Bacteria"/>
</dbReference>
<dbReference type="InParanoid" id="O07631"/>
<dbReference type="OrthoDB" id="9804431at2"/>
<dbReference type="PhylomeDB" id="O07631"/>
<dbReference type="BioCyc" id="BSUB:BSU14770-MONOMER"/>
<dbReference type="Proteomes" id="UP000001570">
    <property type="component" value="Chromosome"/>
</dbReference>
<dbReference type="GO" id="GO:0005829">
    <property type="term" value="C:cytosol"/>
    <property type="evidence" value="ECO:0000318"/>
    <property type="project" value="GO_Central"/>
</dbReference>
<dbReference type="GO" id="GO:1990904">
    <property type="term" value="C:ribonucleoprotein complex"/>
    <property type="evidence" value="ECO:0000318"/>
    <property type="project" value="GO_Central"/>
</dbReference>
<dbReference type="GO" id="GO:0005525">
    <property type="term" value="F:GTP binding"/>
    <property type="evidence" value="ECO:0007669"/>
    <property type="project" value="UniProtKB-UniRule"/>
</dbReference>
<dbReference type="GO" id="GO:0003924">
    <property type="term" value="F:GTPase activity"/>
    <property type="evidence" value="ECO:0000318"/>
    <property type="project" value="GO_Central"/>
</dbReference>
<dbReference type="GO" id="GO:0043022">
    <property type="term" value="F:ribosome binding"/>
    <property type="evidence" value="ECO:0007669"/>
    <property type="project" value="UniProtKB-UniRule"/>
</dbReference>
<dbReference type="GO" id="GO:0019843">
    <property type="term" value="F:rRNA binding"/>
    <property type="evidence" value="ECO:0007669"/>
    <property type="project" value="UniProtKB-KW"/>
</dbReference>
<dbReference type="GO" id="GO:0000049">
    <property type="term" value="F:tRNA binding"/>
    <property type="evidence" value="ECO:0007669"/>
    <property type="project" value="UniProtKB-KW"/>
</dbReference>
<dbReference type="GO" id="GO:0000027">
    <property type="term" value="P:ribosomal large subunit assembly"/>
    <property type="evidence" value="ECO:0007669"/>
    <property type="project" value="UniProtKB-UniRule"/>
</dbReference>
<dbReference type="CDD" id="cd16263">
    <property type="entry name" value="BipA_III"/>
    <property type="match status" value="1"/>
</dbReference>
<dbReference type="CDD" id="cd03710">
    <property type="entry name" value="BipA_TypA_C"/>
    <property type="match status" value="1"/>
</dbReference>
<dbReference type="CDD" id="cd03691">
    <property type="entry name" value="BipA_TypA_II"/>
    <property type="match status" value="1"/>
</dbReference>
<dbReference type="CDD" id="cd01891">
    <property type="entry name" value="TypA_BipA"/>
    <property type="match status" value="1"/>
</dbReference>
<dbReference type="FunFam" id="2.40.30.10:FF:000016">
    <property type="entry name" value="GTP-binding protein TypA"/>
    <property type="match status" value="1"/>
</dbReference>
<dbReference type="FunFam" id="2.40.50.250:FF:000001">
    <property type="entry name" value="GTP-binding protein TypA"/>
    <property type="match status" value="1"/>
</dbReference>
<dbReference type="FunFam" id="3.30.70.240:FF:000002">
    <property type="entry name" value="GTP-binding protein TypA"/>
    <property type="match status" value="1"/>
</dbReference>
<dbReference type="FunFam" id="3.30.70.870:FF:000003">
    <property type="entry name" value="GTP-binding protein TypA"/>
    <property type="match status" value="1"/>
</dbReference>
<dbReference type="FunFam" id="3.40.50.300:FF:000055">
    <property type="entry name" value="GTP-binding protein TypA"/>
    <property type="match status" value="1"/>
</dbReference>
<dbReference type="Gene3D" id="3.30.70.240">
    <property type="match status" value="1"/>
</dbReference>
<dbReference type="Gene3D" id="2.40.50.250">
    <property type="entry name" value="bipa protein"/>
    <property type="match status" value="1"/>
</dbReference>
<dbReference type="Gene3D" id="3.30.70.870">
    <property type="entry name" value="Elongation Factor G (Translational Gtpase), domain 3"/>
    <property type="match status" value="1"/>
</dbReference>
<dbReference type="Gene3D" id="3.40.50.300">
    <property type="entry name" value="P-loop containing nucleotide triphosphate hydrolases"/>
    <property type="match status" value="1"/>
</dbReference>
<dbReference type="Gene3D" id="2.40.30.10">
    <property type="entry name" value="Translation factors"/>
    <property type="match status" value="1"/>
</dbReference>
<dbReference type="HAMAP" id="MF_00849">
    <property type="entry name" value="BipA"/>
    <property type="match status" value="1"/>
</dbReference>
<dbReference type="InterPro" id="IPR006298">
    <property type="entry name" value="BipA"/>
</dbReference>
<dbReference type="InterPro" id="IPR048876">
    <property type="entry name" value="BipA_C"/>
</dbReference>
<dbReference type="InterPro" id="IPR047041">
    <property type="entry name" value="BipA_GTP-bd_dom"/>
</dbReference>
<dbReference type="InterPro" id="IPR047042">
    <property type="entry name" value="BipA_II"/>
</dbReference>
<dbReference type="InterPro" id="IPR047043">
    <property type="entry name" value="BipA_III"/>
</dbReference>
<dbReference type="InterPro" id="IPR035651">
    <property type="entry name" value="BipA_V"/>
</dbReference>
<dbReference type="InterPro" id="IPR041095">
    <property type="entry name" value="EFG_II"/>
</dbReference>
<dbReference type="InterPro" id="IPR035647">
    <property type="entry name" value="EFG_III/V"/>
</dbReference>
<dbReference type="InterPro" id="IPR000640">
    <property type="entry name" value="EFG_V-like"/>
</dbReference>
<dbReference type="InterPro" id="IPR004161">
    <property type="entry name" value="EFTu-like_2"/>
</dbReference>
<dbReference type="InterPro" id="IPR031157">
    <property type="entry name" value="G_TR_CS"/>
</dbReference>
<dbReference type="InterPro" id="IPR027417">
    <property type="entry name" value="P-loop_NTPase"/>
</dbReference>
<dbReference type="InterPro" id="IPR005225">
    <property type="entry name" value="Small_GTP-bd"/>
</dbReference>
<dbReference type="InterPro" id="IPR000795">
    <property type="entry name" value="T_Tr_GTP-bd_dom"/>
</dbReference>
<dbReference type="InterPro" id="IPR009000">
    <property type="entry name" value="Transl_B-barrel_sf"/>
</dbReference>
<dbReference type="InterPro" id="IPR042116">
    <property type="entry name" value="TypA/BipA_C"/>
</dbReference>
<dbReference type="NCBIfam" id="TIGR00231">
    <property type="entry name" value="small_GTP"/>
    <property type="match status" value="1"/>
</dbReference>
<dbReference type="NCBIfam" id="TIGR01394">
    <property type="entry name" value="TypA_BipA"/>
    <property type="match status" value="1"/>
</dbReference>
<dbReference type="PANTHER" id="PTHR42908:SF8">
    <property type="entry name" value="TR-TYPE G DOMAIN-CONTAINING PROTEIN"/>
    <property type="match status" value="1"/>
</dbReference>
<dbReference type="PANTHER" id="PTHR42908">
    <property type="entry name" value="TRANSLATION ELONGATION FACTOR-RELATED"/>
    <property type="match status" value="1"/>
</dbReference>
<dbReference type="Pfam" id="PF21018">
    <property type="entry name" value="BipA_C"/>
    <property type="match status" value="1"/>
</dbReference>
<dbReference type="Pfam" id="PF00679">
    <property type="entry name" value="EFG_C"/>
    <property type="match status" value="1"/>
</dbReference>
<dbReference type="Pfam" id="PF14492">
    <property type="entry name" value="EFG_III"/>
    <property type="match status" value="1"/>
</dbReference>
<dbReference type="Pfam" id="PF00009">
    <property type="entry name" value="GTP_EFTU"/>
    <property type="match status" value="1"/>
</dbReference>
<dbReference type="Pfam" id="PF03144">
    <property type="entry name" value="GTP_EFTU_D2"/>
    <property type="match status" value="1"/>
</dbReference>
<dbReference type="PRINTS" id="PR00315">
    <property type="entry name" value="ELONGATNFCT"/>
</dbReference>
<dbReference type="SMART" id="SM00838">
    <property type="entry name" value="EFG_C"/>
    <property type="match status" value="1"/>
</dbReference>
<dbReference type="SUPFAM" id="SSF54980">
    <property type="entry name" value="EF-G C-terminal domain-like"/>
    <property type="match status" value="2"/>
</dbReference>
<dbReference type="SUPFAM" id="SSF52540">
    <property type="entry name" value="P-loop containing nucleoside triphosphate hydrolases"/>
    <property type="match status" value="1"/>
</dbReference>
<dbReference type="SUPFAM" id="SSF50447">
    <property type="entry name" value="Translation proteins"/>
    <property type="match status" value="1"/>
</dbReference>
<dbReference type="PROSITE" id="PS00301">
    <property type="entry name" value="G_TR_1"/>
    <property type="match status" value="1"/>
</dbReference>
<dbReference type="PROSITE" id="PS51722">
    <property type="entry name" value="G_TR_2"/>
    <property type="match status" value="1"/>
</dbReference>
<feature type="chain" id="PRO_0000091546" description="Large ribosomal subunit assembly factor BipA">
    <location>
        <begin position="1"/>
        <end position="612"/>
    </location>
</feature>
<feature type="domain" description="tr-type G" evidence="1">
    <location>
        <begin position="5"/>
        <end position="200"/>
    </location>
</feature>
<feature type="binding site" evidence="1">
    <location>
        <begin position="17"/>
        <end position="22"/>
    </location>
    <ligand>
        <name>GTP</name>
        <dbReference type="ChEBI" id="CHEBI:37565"/>
    </ligand>
</feature>
<feature type="binding site" evidence="1">
    <location>
        <begin position="130"/>
        <end position="133"/>
    </location>
    <ligand>
        <name>GTP</name>
        <dbReference type="ChEBI" id="CHEBI:37565"/>
    </ligand>
</feature>
<gene>
    <name evidence="1" type="primary">bipA</name>
    <name evidence="3" type="synonym">ylaG</name>
    <name type="ordered locus">BSU14770</name>
</gene>
<protein>
    <recommendedName>
        <fullName evidence="1">Large ribosomal subunit assembly factor BipA</fullName>
        <ecNumber evidence="1">3.6.5.-</ecNumber>
    </recommendedName>
    <alternativeName>
        <fullName evidence="4">50S ribosomal subunit assembly factor BipA</fullName>
    </alternativeName>
    <alternativeName>
        <fullName evidence="1">GTP-binding protein BipA</fullName>
    </alternativeName>
</protein>
<reference key="1">
    <citation type="submission" date="1997-06" db="EMBL/GenBank/DDBJ databases">
        <authorList>
            <person name="Purnelle B."/>
            <person name="Presecan E."/>
            <person name="Glaser P."/>
            <person name="Richou A."/>
            <person name="Danchin A."/>
            <person name="Goffeau A."/>
        </authorList>
    </citation>
    <scope>NUCLEOTIDE SEQUENCE [GENOMIC DNA]</scope>
    <source>
        <strain>168</strain>
    </source>
</reference>
<reference key="2">
    <citation type="journal article" date="1997" name="Nature">
        <title>The complete genome sequence of the Gram-positive bacterium Bacillus subtilis.</title>
        <authorList>
            <person name="Kunst F."/>
            <person name="Ogasawara N."/>
            <person name="Moszer I."/>
            <person name="Albertini A.M."/>
            <person name="Alloni G."/>
            <person name="Azevedo V."/>
            <person name="Bertero M.G."/>
            <person name="Bessieres P."/>
            <person name="Bolotin A."/>
            <person name="Borchert S."/>
            <person name="Borriss R."/>
            <person name="Boursier L."/>
            <person name="Brans A."/>
            <person name="Braun M."/>
            <person name="Brignell S.C."/>
            <person name="Bron S."/>
            <person name="Brouillet S."/>
            <person name="Bruschi C.V."/>
            <person name="Caldwell B."/>
            <person name="Capuano V."/>
            <person name="Carter N.M."/>
            <person name="Choi S.-K."/>
            <person name="Codani J.-J."/>
            <person name="Connerton I.F."/>
            <person name="Cummings N.J."/>
            <person name="Daniel R.A."/>
            <person name="Denizot F."/>
            <person name="Devine K.M."/>
            <person name="Duesterhoeft A."/>
            <person name="Ehrlich S.D."/>
            <person name="Emmerson P.T."/>
            <person name="Entian K.-D."/>
            <person name="Errington J."/>
            <person name="Fabret C."/>
            <person name="Ferrari E."/>
            <person name="Foulger D."/>
            <person name="Fritz C."/>
            <person name="Fujita M."/>
            <person name="Fujita Y."/>
            <person name="Fuma S."/>
            <person name="Galizzi A."/>
            <person name="Galleron N."/>
            <person name="Ghim S.-Y."/>
            <person name="Glaser P."/>
            <person name="Goffeau A."/>
            <person name="Golightly E.J."/>
            <person name="Grandi G."/>
            <person name="Guiseppi G."/>
            <person name="Guy B.J."/>
            <person name="Haga K."/>
            <person name="Haiech J."/>
            <person name="Harwood C.R."/>
            <person name="Henaut A."/>
            <person name="Hilbert H."/>
            <person name="Holsappel S."/>
            <person name="Hosono S."/>
            <person name="Hullo M.-F."/>
            <person name="Itaya M."/>
            <person name="Jones L.-M."/>
            <person name="Joris B."/>
            <person name="Karamata D."/>
            <person name="Kasahara Y."/>
            <person name="Klaerr-Blanchard M."/>
            <person name="Klein C."/>
            <person name="Kobayashi Y."/>
            <person name="Koetter P."/>
            <person name="Koningstein G."/>
            <person name="Krogh S."/>
            <person name="Kumano M."/>
            <person name="Kurita K."/>
            <person name="Lapidus A."/>
            <person name="Lardinois S."/>
            <person name="Lauber J."/>
            <person name="Lazarevic V."/>
            <person name="Lee S.-M."/>
            <person name="Levine A."/>
            <person name="Liu H."/>
            <person name="Masuda S."/>
            <person name="Mauel C."/>
            <person name="Medigue C."/>
            <person name="Medina N."/>
            <person name="Mellado R.P."/>
            <person name="Mizuno M."/>
            <person name="Moestl D."/>
            <person name="Nakai S."/>
            <person name="Noback M."/>
            <person name="Noone D."/>
            <person name="O'Reilly M."/>
            <person name="Ogawa K."/>
            <person name="Ogiwara A."/>
            <person name="Oudega B."/>
            <person name="Park S.-H."/>
            <person name="Parro V."/>
            <person name="Pohl T.M."/>
            <person name="Portetelle D."/>
            <person name="Porwollik S."/>
            <person name="Prescott A.M."/>
            <person name="Presecan E."/>
            <person name="Pujic P."/>
            <person name="Purnelle B."/>
            <person name="Rapoport G."/>
            <person name="Rey M."/>
            <person name="Reynolds S."/>
            <person name="Rieger M."/>
            <person name="Rivolta C."/>
            <person name="Rocha E."/>
            <person name="Roche B."/>
            <person name="Rose M."/>
            <person name="Sadaie Y."/>
            <person name="Sato T."/>
            <person name="Scanlan E."/>
            <person name="Schleich S."/>
            <person name="Schroeter R."/>
            <person name="Scoffone F."/>
            <person name="Sekiguchi J."/>
            <person name="Sekowska A."/>
            <person name="Seror S.J."/>
            <person name="Serror P."/>
            <person name="Shin B.-S."/>
            <person name="Soldo B."/>
            <person name="Sorokin A."/>
            <person name="Tacconi E."/>
            <person name="Takagi T."/>
            <person name="Takahashi H."/>
            <person name="Takemaru K."/>
            <person name="Takeuchi M."/>
            <person name="Tamakoshi A."/>
            <person name="Tanaka T."/>
            <person name="Terpstra P."/>
            <person name="Tognoni A."/>
            <person name="Tosato V."/>
            <person name="Uchiyama S."/>
            <person name="Vandenbol M."/>
            <person name="Vannier F."/>
            <person name="Vassarotti A."/>
            <person name="Viari A."/>
            <person name="Wambutt R."/>
            <person name="Wedler E."/>
            <person name="Wedler H."/>
            <person name="Weitzenegger T."/>
            <person name="Winters P."/>
            <person name="Wipat A."/>
            <person name="Yamamoto H."/>
            <person name="Yamane K."/>
            <person name="Yasumoto K."/>
            <person name="Yata K."/>
            <person name="Yoshida K."/>
            <person name="Yoshikawa H.-F."/>
            <person name="Zumstein E."/>
            <person name="Yoshikawa H."/>
            <person name="Danchin A."/>
        </authorList>
    </citation>
    <scope>NUCLEOTIDE SEQUENCE [LARGE SCALE GENOMIC DNA]</scope>
    <source>
        <strain>168</strain>
    </source>
</reference>
<reference key="3">
    <citation type="journal article" date="2002" name="J. Bacteriol.">
        <title>Genomewide transcriptional analysis of the cold shock response in Bacillus subtilis.</title>
        <authorList>
            <person name="Beckering C.L."/>
            <person name="Steil L."/>
            <person name="Weber M.H.W."/>
            <person name="Voelker U."/>
            <person name="Marahiel M.A."/>
        </authorList>
    </citation>
    <scope>INDUCTION BY COLD SHOCK</scope>
    <scope>DISRUPTION PHENOTYPE</scope>
    <source>
        <strain>168 / JH642</strain>
    </source>
</reference>
<name>BIPA_BACSU</name>
<keyword id="KW-0963">Cytoplasm</keyword>
<keyword id="KW-0342">GTP-binding</keyword>
<keyword id="KW-0378">Hydrolase</keyword>
<keyword id="KW-0547">Nucleotide-binding</keyword>
<keyword id="KW-1185">Reference proteome</keyword>
<keyword id="KW-0690">Ribosome biogenesis</keyword>
<keyword id="KW-0694">RNA-binding</keyword>
<keyword id="KW-0699">rRNA-binding</keyword>
<keyword id="KW-0820">tRNA-binding</keyword>
<comment type="function">
    <text evidence="1">A 50S ribosomal subunit assembly protein with GTPase activity, required for 50S subunit assembly at low temperatures, may also play a role in translation. Binds GTP and analogs. Binds the 70S ribosome between the 30S and 50S subunits, in a similar position as ribosome-bound EF-G; it contacts a number of ribosomal proteins, both rRNAs and the A-site tRNA.</text>
</comment>
<comment type="catalytic activity">
    <reaction evidence="1">
        <text>GTP + H2O = GDP + phosphate + H(+)</text>
        <dbReference type="Rhea" id="RHEA:19669"/>
        <dbReference type="ChEBI" id="CHEBI:15377"/>
        <dbReference type="ChEBI" id="CHEBI:15378"/>
        <dbReference type="ChEBI" id="CHEBI:37565"/>
        <dbReference type="ChEBI" id="CHEBI:43474"/>
        <dbReference type="ChEBI" id="CHEBI:58189"/>
    </reaction>
</comment>
<comment type="subunit">
    <text evidence="1">Monomer.</text>
</comment>
<comment type="subcellular location">
    <subcellularLocation>
        <location evidence="1">Cytoplasm</location>
    </subcellularLocation>
    <text evidence="1">Binds to ribosomes.</text>
</comment>
<comment type="induction">
    <text evidence="2">3-fold induction by growth at 15 degrees Celsius.</text>
</comment>
<comment type="disruption phenotype">
    <text evidence="2">No visible growth phenotype at 15 degrees Celsius.</text>
</comment>
<comment type="similarity">
    <text evidence="1">Belongs to the TRAFAC class translation factor GTPase superfamily. Classic translation factor GTPase family. BipA subfamily.</text>
</comment>
<sequence>MKLRNDLRNIAIIAHVDHGKTTLVDQLLHQAGTFRANEQVAERAMDSNDLERERGITILAKNTAINYKDTRINILDTPGHADFGGEVERIMKMVDGVVLVVDAYEGCMPQTRFVLKKALEQNLNPVVVVNKIDRDFARPEEVIDEVLDLFIELDANEEQLEFPVVYASAINGTASLDPKQQDENMEALYETIIKHVPAPVDNAEEPLQFQVALLDYNDYVGRIGIGRVFRGTMKVGQQVSLMKLDGTAKSFRVTKIFGFQGLKRVEIEEAKAGDLVAVSGMEDINVGETVCPVDHQDPLPVLRIDEPTLQMTFVVNNSPFAGREGKYVTARKIEERLQSQLQTDVSLRVEPTASPDAWVVSGRGELHLSILIENMRREGYELQVSKPEVIIKEIDGVRCEPVERVQIDVPEEHTGSVMESMGARKGEMVDMINNGNGQVRLIFTVPSRGLIGYSTEFLSLTRGFGILNHTFDSYQPMQAGQVGGRRQGVLVSMENGKATSYGIQGIEDRGVIFVEPGTEVYEGMIVGEHNRDNDLVVNVSKMKQQTNVRSATKDQTTTIKKARIMSLEESLEYLNEDEYCEVTPESIRLRKKILNKNEREKAAKKKKTAGLS</sequence>
<organism>
    <name type="scientific">Bacillus subtilis (strain 168)</name>
    <dbReference type="NCBI Taxonomy" id="224308"/>
    <lineage>
        <taxon>Bacteria</taxon>
        <taxon>Bacillati</taxon>
        <taxon>Bacillota</taxon>
        <taxon>Bacilli</taxon>
        <taxon>Bacillales</taxon>
        <taxon>Bacillaceae</taxon>
        <taxon>Bacillus</taxon>
    </lineage>
</organism>
<accession>O07631</accession>
<evidence type="ECO:0000255" key="1">
    <source>
        <dbReference type="HAMAP-Rule" id="MF_00849"/>
    </source>
</evidence>
<evidence type="ECO:0000269" key="2">
    <source>
    </source>
</evidence>
<evidence type="ECO:0000303" key="3">
    <source>
    </source>
</evidence>
<evidence type="ECO:0000305" key="4"/>